<reference key="1">
    <citation type="journal article" date="1997" name="Nature">
        <title>The nucleotide sequence of Saccharomyces cerevisiae chromosome XII.</title>
        <authorList>
            <person name="Johnston M."/>
            <person name="Hillier L.W."/>
            <person name="Riles L."/>
            <person name="Albermann K."/>
            <person name="Andre B."/>
            <person name="Ansorge W."/>
            <person name="Benes V."/>
            <person name="Brueckner M."/>
            <person name="Delius H."/>
            <person name="Dubois E."/>
            <person name="Duesterhoeft A."/>
            <person name="Entian K.-D."/>
            <person name="Floeth M."/>
            <person name="Goffeau A."/>
            <person name="Hebling U."/>
            <person name="Heumann K."/>
            <person name="Heuss-Neitzel D."/>
            <person name="Hilbert H."/>
            <person name="Hilger F."/>
            <person name="Kleine K."/>
            <person name="Koetter P."/>
            <person name="Louis E.J."/>
            <person name="Messenguy F."/>
            <person name="Mewes H.-W."/>
            <person name="Miosga T."/>
            <person name="Moestl D."/>
            <person name="Mueller-Auer S."/>
            <person name="Nentwich U."/>
            <person name="Obermaier B."/>
            <person name="Piravandi E."/>
            <person name="Pohl T.M."/>
            <person name="Portetelle D."/>
            <person name="Purnelle B."/>
            <person name="Rechmann S."/>
            <person name="Rieger M."/>
            <person name="Rinke M."/>
            <person name="Rose M."/>
            <person name="Scharfe M."/>
            <person name="Scherens B."/>
            <person name="Scholler P."/>
            <person name="Schwager C."/>
            <person name="Schwarz S."/>
            <person name="Underwood A.P."/>
            <person name="Urrestarazu L.A."/>
            <person name="Vandenbol M."/>
            <person name="Verhasselt P."/>
            <person name="Vierendeels F."/>
            <person name="Voet M."/>
            <person name="Volckaert G."/>
            <person name="Voss H."/>
            <person name="Wambutt R."/>
            <person name="Wedler E."/>
            <person name="Wedler H."/>
            <person name="Zimmermann F.K."/>
            <person name="Zollner A."/>
            <person name="Hani J."/>
            <person name="Hoheisel J.D."/>
        </authorList>
    </citation>
    <scope>NUCLEOTIDE SEQUENCE [LARGE SCALE GENOMIC DNA]</scope>
    <source>
        <strain>ATCC 204508 / S288c</strain>
    </source>
</reference>
<reference key="2">
    <citation type="journal article" date="2014" name="G3 (Bethesda)">
        <title>The reference genome sequence of Saccharomyces cerevisiae: Then and now.</title>
        <authorList>
            <person name="Engel S.R."/>
            <person name="Dietrich F.S."/>
            <person name="Fisk D.G."/>
            <person name="Binkley G."/>
            <person name="Balakrishnan R."/>
            <person name="Costanzo M.C."/>
            <person name="Dwight S.S."/>
            <person name="Hitz B.C."/>
            <person name="Karra K."/>
            <person name="Nash R.S."/>
            <person name="Weng S."/>
            <person name="Wong E.D."/>
            <person name="Lloyd P."/>
            <person name="Skrzypek M.S."/>
            <person name="Miyasato S.R."/>
            <person name="Simison M."/>
            <person name="Cherry J.M."/>
        </authorList>
    </citation>
    <scope>GENOME REANNOTATION</scope>
    <source>
        <strain>ATCC 204508 / S288c</strain>
    </source>
</reference>
<reference key="3">
    <citation type="journal article" date="2000" name="FEBS Lett.">
        <title>Transcriptional regulation of the Saccharomyces cerevisiae DAL5 gene family and identification of the high affinity nicotinic acid permease TNA1 (YGR260w).</title>
        <authorList>
            <person name="Llorente B."/>
            <person name="Dujon B."/>
        </authorList>
    </citation>
    <scope>INDUCTION</scope>
</reference>
<reference key="4">
    <citation type="journal article" date="2005" name="Mol. Microbiol.">
        <title>Genetic regulation mediated by thiamin pyrophosphate-binding motif in Saccharomyces cerevisiae.</title>
        <authorList>
            <person name="Nosaka K."/>
            <person name="Onozuka M."/>
            <person name="Konno H."/>
            <person name="Kawasaki Y."/>
            <person name="Nishimura H."/>
            <person name="Sano M."/>
            <person name="Akaji K."/>
        </authorList>
    </citation>
    <scope>INDUCTION</scope>
</reference>
<reference key="5">
    <citation type="journal article" date="2006" name="Mol. Genet. Genomics">
        <title>Pdc2 coordinates expression of the THI regulon in the yeast Saccharomyces cerevisiae.</title>
        <authorList>
            <person name="Mojzita D."/>
            <person name="Hohmann S."/>
        </authorList>
    </citation>
    <scope>FUNCTION</scope>
    <scope>SUBCELLULAR LOCATION</scope>
</reference>
<reference key="6">
    <citation type="journal article" date="2006" name="Proc. Natl. Acad. Sci. U.S.A.">
        <title>A global topology map of the Saccharomyces cerevisiae membrane proteome.</title>
        <authorList>
            <person name="Kim H."/>
            <person name="Melen K."/>
            <person name="Oesterberg M."/>
            <person name="von Heijne G."/>
        </authorList>
    </citation>
    <scope>TOPOLOGY [LARGE SCALE ANALYSIS]</scope>
    <source>
        <strain>ATCC 208353 / W303-1A</strain>
    </source>
</reference>
<keyword id="KW-1003">Cell membrane</keyword>
<keyword id="KW-0256">Endoplasmic reticulum</keyword>
<keyword id="KW-0472">Membrane</keyword>
<keyword id="KW-1185">Reference proteome</keyword>
<keyword id="KW-0812">Transmembrane</keyword>
<keyword id="KW-1133">Transmembrane helix</keyword>
<keyword id="KW-0813">Transport</keyword>
<comment type="function">
    <text evidence="4">Transports either thiamine or, rather, a related metabolite involved in the thiamine biosynthesis pathway.</text>
</comment>
<comment type="subcellular location">
    <subcellularLocation>
        <location evidence="4">Endoplasmic reticulum membrane</location>
        <topology evidence="4">Multi-pass membrane protein</topology>
    </subcellularLocation>
    <subcellularLocation>
        <location evidence="6">Cell membrane</location>
        <topology evidence="6">Multi-pass membrane protein</topology>
    </subcellularLocation>
</comment>
<comment type="induction">
    <text evidence="2 3">Induced by limited extracellular thiamine levels.</text>
</comment>
<comment type="similarity">
    <text evidence="5">Belongs to the major facilitator superfamily. Allantoate permease family.</text>
</comment>
<proteinExistence type="evidence at protein level"/>
<accession>Q07904</accession>
<accession>D6VY06</accession>
<name>THI73_YEAST</name>
<evidence type="ECO:0000255" key="1"/>
<evidence type="ECO:0000269" key="2">
    <source>
    </source>
</evidence>
<evidence type="ECO:0000269" key="3">
    <source>
    </source>
</evidence>
<evidence type="ECO:0000269" key="4">
    <source>
    </source>
</evidence>
<evidence type="ECO:0000305" key="5"/>
<evidence type="ECO:0000305" key="6">
    <source>
    </source>
</evidence>
<organism>
    <name type="scientific">Saccharomyces cerevisiae (strain ATCC 204508 / S288c)</name>
    <name type="common">Baker's yeast</name>
    <dbReference type="NCBI Taxonomy" id="559292"/>
    <lineage>
        <taxon>Eukaryota</taxon>
        <taxon>Fungi</taxon>
        <taxon>Dikarya</taxon>
        <taxon>Ascomycota</taxon>
        <taxon>Saccharomycotina</taxon>
        <taxon>Saccharomycetes</taxon>
        <taxon>Saccharomycetales</taxon>
        <taxon>Saccharomycetaceae</taxon>
        <taxon>Saccharomyces</taxon>
    </lineage>
</organism>
<gene>
    <name type="primary">THI73</name>
    <name type="ordered locus">YLR004C</name>
</gene>
<feature type="chain" id="PRO_0000247182" description="Thiamine pathway transporter THI73">
    <location>
        <begin position="1"/>
        <end position="523"/>
    </location>
</feature>
<feature type="topological domain" description="Cytoplasmic" evidence="1">
    <location>
        <begin position="1"/>
        <end position="79"/>
    </location>
</feature>
<feature type="transmembrane region" description="Helical" evidence="1">
    <location>
        <begin position="80"/>
        <end position="100"/>
    </location>
</feature>
<feature type="topological domain" description="Extracellular" evidence="1">
    <location>
        <begin position="101"/>
        <end position="118"/>
    </location>
</feature>
<feature type="transmembrane region" description="Helical" evidence="1">
    <location>
        <begin position="119"/>
        <end position="139"/>
    </location>
</feature>
<feature type="topological domain" description="Cytoplasmic" evidence="1">
    <location>
        <begin position="140"/>
        <end position="141"/>
    </location>
</feature>
<feature type="transmembrane region" description="Helical" evidence="1">
    <location>
        <begin position="142"/>
        <end position="162"/>
    </location>
</feature>
<feature type="topological domain" description="Extracellular" evidence="1">
    <location>
        <begin position="163"/>
        <end position="176"/>
    </location>
</feature>
<feature type="transmembrane region" description="Helical" evidence="1">
    <location>
        <begin position="177"/>
        <end position="197"/>
    </location>
</feature>
<feature type="topological domain" description="Cytoplasmic" evidence="1">
    <location>
        <begin position="198"/>
        <end position="207"/>
    </location>
</feature>
<feature type="transmembrane region" description="Helical" evidence="1">
    <location>
        <begin position="208"/>
        <end position="228"/>
    </location>
</feature>
<feature type="topological domain" description="Extracellular" evidence="1">
    <location>
        <begin position="229"/>
        <end position="239"/>
    </location>
</feature>
<feature type="transmembrane region" description="Helical" evidence="1">
    <location>
        <begin position="240"/>
        <end position="260"/>
    </location>
</feature>
<feature type="topological domain" description="Cytoplasmic" evidence="1">
    <location>
        <begin position="261"/>
        <end position="312"/>
    </location>
</feature>
<feature type="transmembrane region" description="Helical" evidence="1">
    <location>
        <begin position="313"/>
        <end position="333"/>
    </location>
</feature>
<feature type="topological domain" description="Extracellular" evidence="1">
    <location>
        <begin position="334"/>
        <end position="345"/>
    </location>
</feature>
<feature type="transmembrane region" description="Helical" evidence="1">
    <location>
        <begin position="346"/>
        <end position="366"/>
    </location>
</feature>
<feature type="topological domain" description="Cytoplasmic" evidence="1">
    <location>
        <begin position="367"/>
        <end position="371"/>
    </location>
</feature>
<feature type="transmembrane region" description="Helical" evidence="1">
    <location>
        <begin position="372"/>
        <end position="392"/>
    </location>
</feature>
<feature type="topological domain" description="Extracellular" evidence="1">
    <location>
        <begin position="393"/>
        <end position="400"/>
    </location>
</feature>
<feature type="transmembrane region" description="Helical" evidence="1">
    <location>
        <begin position="401"/>
        <end position="421"/>
    </location>
</feature>
<feature type="topological domain" description="Cytoplasmic" evidence="1">
    <location>
        <begin position="422"/>
        <end position="432"/>
    </location>
</feature>
<feature type="transmembrane region" description="Helical" evidence="1">
    <location>
        <begin position="433"/>
        <end position="452"/>
    </location>
</feature>
<feature type="topological domain" description="Extracellular" evidence="1">
    <location>
        <begin position="453"/>
        <end position="466"/>
    </location>
</feature>
<feature type="transmembrane region" description="Helical" evidence="1">
    <location>
        <begin position="467"/>
        <end position="487"/>
    </location>
</feature>
<feature type="topological domain" description="Cytoplasmic" evidence="1">
    <location>
        <begin position="488"/>
        <end position="523"/>
    </location>
</feature>
<sequence length="523" mass="58531">MKNMSQRSMDVEKKAANADSCSVSTSSINVDDADVALRFLKQNGLDESSTANEDDVVAGEEANFYGSHELSPKVLRKVDLFILPFLCCTYLLMFLDKALLNYAASMGIKDHLKGNEFSNLGTIFSAAYIFMEPVVTYLIQKFPISKILGTFITVWGIVLACHAACKTYASLMVVRTLLGLFESSSAVGCIAISGMYYTKSEQSARIGFWATQAGTGYIVGGLISFGFLHYHGTAFTSWQIMFLVVGLVTVAFGVLTFLYLPDNVTNAWFLNKEEKIQVVEHIRANQTGLETKKFKKQQVKELFLHDKFTWPMLLLTACSQISTGAIGTFSVTITGTFGFDKYETALLQLPIGAITAMIILITTQMLSRWGHITLITTSMYIPAIIGCIVLISLPLSHKIGNLFSLYLLYSGSCVITNIYIWNSCNTSGYTKRVFRNAITMIVYNVSCIIAPQMFRAYSAPRYIPAKIALLVTQCVCVPLQLYIGYICKKENEKRDKEQEGQERKKYQFLDLTDIENRNFRYIY</sequence>
<protein>
    <recommendedName>
        <fullName>Thiamine pathway transporter THI73</fullName>
    </recommendedName>
</protein>
<dbReference type="EMBL" id="Z73176">
    <property type="protein sequence ID" value="CAA97526.1"/>
    <property type="molecule type" value="Genomic_DNA"/>
</dbReference>
<dbReference type="EMBL" id="BK006945">
    <property type="protein sequence ID" value="DAA09322.1"/>
    <property type="molecule type" value="Genomic_DNA"/>
</dbReference>
<dbReference type="PIR" id="S64826">
    <property type="entry name" value="S64826"/>
</dbReference>
<dbReference type="RefSeq" id="NP_013104.1">
    <property type="nucleotide sequence ID" value="NM_001181891.1"/>
</dbReference>
<dbReference type="SMR" id="Q07904"/>
<dbReference type="BioGRID" id="31277">
    <property type="interactions" value="48"/>
</dbReference>
<dbReference type="DIP" id="DIP-8846N"/>
<dbReference type="FunCoup" id="Q07904">
    <property type="interactions" value="187"/>
</dbReference>
<dbReference type="STRING" id="4932.YLR004C"/>
<dbReference type="TCDB" id="2.A.1.14.36">
    <property type="family name" value="the major facilitator superfamily (mfs)"/>
</dbReference>
<dbReference type="PaxDb" id="4932-YLR004C"/>
<dbReference type="PeptideAtlas" id="Q07904"/>
<dbReference type="EnsemblFungi" id="YLR004C_mRNA">
    <property type="protein sequence ID" value="YLR004C"/>
    <property type="gene ID" value="YLR004C"/>
</dbReference>
<dbReference type="GeneID" id="850690"/>
<dbReference type="KEGG" id="sce:YLR004C"/>
<dbReference type="AGR" id="SGD:S000003994"/>
<dbReference type="SGD" id="S000003994">
    <property type="gene designation" value="THI73"/>
</dbReference>
<dbReference type="VEuPathDB" id="FungiDB:YLR004C"/>
<dbReference type="eggNOG" id="KOG2533">
    <property type="taxonomic scope" value="Eukaryota"/>
</dbReference>
<dbReference type="HOGENOM" id="CLU_001265_0_5_1"/>
<dbReference type="InParanoid" id="Q07904"/>
<dbReference type="OMA" id="ITNIYIW"/>
<dbReference type="OrthoDB" id="6730379at2759"/>
<dbReference type="BioCyc" id="YEAST:G3O-32165-MONOMER"/>
<dbReference type="BioGRID-ORCS" id="850690">
    <property type="hits" value="1 hit in 10 CRISPR screens"/>
</dbReference>
<dbReference type="PRO" id="PR:Q07904"/>
<dbReference type="Proteomes" id="UP000002311">
    <property type="component" value="Chromosome XII"/>
</dbReference>
<dbReference type="RNAct" id="Q07904">
    <property type="molecule type" value="protein"/>
</dbReference>
<dbReference type="GO" id="GO:0071944">
    <property type="term" value="C:cell periphery"/>
    <property type="evidence" value="ECO:0007005"/>
    <property type="project" value="SGD"/>
</dbReference>
<dbReference type="GO" id="GO:0005783">
    <property type="term" value="C:endoplasmic reticulum"/>
    <property type="evidence" value="ECO:0000314"/>
    <property type="project" value="SGD"/>
</dbReference>
<dbReference type="GO" id="GO:0005789">
    <property type="term" value="C:endoplasmic reticulum membrane"/>
    <property type="evidence" value="ECO:0007669"/>
    <property type="project" value="UniProtKB-SubCell"/>
</dbReference>
<dbReference type="GO" id="GO:0016020">
    <property type="term" value="C:membrane"/>
    <property type="evidence" value="ECO:0000318"/>
    <property type="project" value="GO_Central"/>
</dbReference>
<dbReference type="GO" id="GO:0005886">
    <property type="term" value="C:plasma membrane"/>
    <property type="evidence" value="ECO:0007669"/>
    <property type="project" value="UniProtKB-SubCell"/>
</dbReference>
<dbReference type="GO" id="GO:0022857">
    <property type="term" value="F:transmembrane transporter activity"/>
    <property type="evidence" value="ECO:0000250"/>
    <property type="project" value="SGD"/>
</dbReference>
<dbReference type="GO" id="GO:0055085">
    <property type="term" value="P:transmembrane transport"/>
    <property type="evidence" value="ECO:0000250"/>
    <property type="project" value="SGD"/>
</dbReference>
<dbReference type="CDD" id="cd17327">
    <property type="entry name" value="MFS_FEN2_like"/>
    <property type="match status" value="1"/>
</dbReference>
<dbReference type="FunFam" id="1.20.1250.20:FF:000482">
    <property type="entry name" value="Thi73p"/>
    <property type="match status" value="1"/>
</dbReference>
<dbReference type="Gene3D" id="1.20.1250.20">
    <property type="entry name" value="MFS general substrate transporter like domains"/>
    <property type="match status" value="1"/>
</dbReference>
<dbReference type="InterPro" id="IPR011701">
    <property type="entry name" value="MFS"/>
</dbReference>
<dbReference type="InterPro" id="IPR036259">
    <property type="entry name" value="MFS_trans_sf"/>
</dbReference>
<dbReference type="PANTHER" id="PTHR43791">
    <property type="entry name" value="PERMEASE-RELATED"/>
    <property type="match status" value="1"/>
</dbReference>
<dbReference type="PANTHER" id="PTHR43791:SF40">
    <property type="entry name" value="THIAMINE PATHWAY TRANSPORTER THI73"/>
    <property type="match status" value="1"/>
</dbReference>
<dbReference type="Pfam" id="PF07690">
    <property type="entry name" value="MFS_1"/>
    <property type="match status" value="1"/>
</dbReference>
<dbReference type="SUPFAM" id="SSF103473">
    <property type="entry name" value="MFS general substrate transporter"/>
    <property type="match status" value="1"/>
</dbReference>